<dbReference type="EMBL" id="U00735">
    <property type="status" value="NOT_ANNOTATED_CDS"/>
    <property type="molecule type" value="Genomic_RNA"/>
</dbReference>
<dbReference type="PIR" id="C26347">
    <property type="entry name" value="QQIHBC"/>
</dbReference>
<dbReference type="Proteomes" id="UP000007554">
    <property type="component" value="Genome"/>
</dbReference>
<dbReference type="GO" id="GO:0044423">
    <property type="term" value="C:virion component"/>
    <property type="evidence" value="ECO:0007669"/>
    <property type="project" value="UniProtKB-KW"/>
</dbReference>
<dbReference type="CDD" id="cd21662">
    <property type="entry name" value="embe-CoV_Protein-I_like"/>
    <property type="match status" value="1"/>
</dbReference>
<dbReference type="InterPro" id="IPR004876">
    <property type="entry name" value="Corona_nucI"/>
</dbReference>
<dbReference type="InterPro" id="IPR044311">
    <property type="entry name" value="N2-like_embe-CoV"/>
</dbReference>
<dbReference type="Pfam" id="PF03187">
    <property type="entry name" value="Corona_I"/>
    <property type="match status" value="1"/>
</dbReference>
<gene>
    <name type="primary">N</name>
    <name type="synonym">I</name>
    <name type="ORF">7b</name>
</gene>
<name>IORF_CVBM</name>
<evidence type="ECO:0000250" key="1"/>
<evidence type="ECO:0000305" key="2"/>
<keyword id="KW-0946">Virion</keyword>
<feature type="chain" id="PRO_0000106118" description="Protein I">
    <location>
        <begin position="1"/>
        <end position="207"/>
    </location>
</feature>
<reference key="1">
    <citation type="journal article" date="1987" name="Virology">
        <title>Sequence analysis of the bovine coronavirus nucleocapsid and matrix protein genes.</title>
        <authorList>
            <person name="Lapps W.E."/>
            <person name="Hogue B.G."/>
            <person name="Brian D.A."/>
        </authorList>
    </citation>
    <scope>NUCLEOTIDE SEQUENCE [GENOMIC RNA]</scope>
</reference>
<protein>
    <recommendedName>
        <fullName>Protein I</fullName>
    </recommendedName>
    <alternativeName>
        <fullName>Accessory protein N2</fullName>
    </alternativeName>
    <alternativeName>
        <fullName>N internal ORF protein</fullName>
        <shortName>IORF</shortName>
    </alternativeName>
    <alternativeName>
        <fullName>Protein in nucleocapsid ORF</fullName>
    </alternativeName>
</protein>
<accession>P10525</accession>
<organism>
    <name type="scientific">Bovine coronavirus (strain Mebus)</name>
    <name type="common">BCoV</name>
    <name type="synonym">BCV</name>
    <dbReference type="NCBI Taxonomy" id="11132"/>
    <lineage>
        <taxon>Viruses</taxon>
        <taxon>Riboviria</taxon>
        <taxon>Orthornavirae</taxon>
        <taxon>Pisuviricota</taxon>
        <taxon>Pisoniviricetes</taxon>
        <taxon>Nidovirales</taxon>
        <taxon>Cornidovirineae</taxon>
        <taxon>Coronaviridae</taxon>
        <taxon>Orthocoronavirinae</taxon>
        <taxon>Betacoronavirus</taxon>
        <taxon>Embecovirus</taxon>
        <taxon>Betacoronavirus 1</taxon>
    </lineage>
</organism>
<comment type="function">
    <text evidence="1">Structural protein that is not essential for the viral replication either in tissue culture or in its natural host.</text>
</comment>
<comment type="subcellular location">
    <subcellularLocation>
        <location evidence="1">Virion</location>
    </subcellularLocation>
</comment>
<comment type="miscellaneous">
    <text>The gene encoding this protein is included within the N gene (alternative ORF).</text>
</comment>
<comment type="similarity">
    <text evidence="2">Belongs to the coronavirus I protein family.</text>
</comment>
<sequence>MASLSGPISPTNLEMFKPGVEELNPSKLLLLSYHQEGMLYPTILGSLELLSFKKERSLNLQRDKVCLLHQESQLLKLRGTGTDTTDVLLKQPMATSVNCCHDGIFTILEQDRMPKTSMAPILTESSGSLVTRLMSIPRLTFSIGTQVAMRLFRLGFRLARYSLRVTILKAQEGLLLIPDLLHAHPVEPLVQDRVVEPILATEPLPLV</sequence>
<proteinExistence type="inferred from homology"/>
<organismHost>
    <name type="scientific">Bos taurus</name>
    <name type="common">Bovine</name>
    <dbReference type="NCBI Taxonomy" id="9913"/>
</organismHost>